<comment type="function">
    <text evidence="10 11">Involved in cytoskeletal rearrangements required for phagocytosis of apoptotic cells and cell motility. Along with DOCK1, mediates CRK/CRKL regulation of epithelial and endothelial cell spreading and migration on type IV collagen (PubMed:19004829). Functions as a guanine nucleotide exchange factor (GEF), which activates Rac Rho small GTPases by exchanging bound GDP for free GTP. Its GEF activity may be enhanced by ELMO1 (PubMed:8657152).</text>
</comment>
<comment type="subunit">
    <text evidence="1 7 8 9 11 12 13">Interacts with the SH3 domains of CRK and NCK2 via multiple sites (PubMed:11240126, PubMed:8657152, PubMed:8662907). Interacts with nucleotide-free RAC1 via its DOCKER domain (PubMed:12134158, PubMed:9808620). Interacts with ELMO1, ELMO2 and probably ELMO3 via its SH3 domain (PubMed:12134158). Interacts with ADGRB1. Identified in a complex with AUTS2 and ELMO2 (By similarity).</text>
</comment>
<comment type="interaction">
    <interactant intactId="EBI-446740">
        <id>Q14185</id>
    </interactant>
    <interactant intactId="EBI-359567">
        <id>O15084</id>
        <label>ANKRD28</label>
    </interactant>
    <organismsDiffer>false</organismsDiffer>
    <experiments>4</experiments>
</comment>
<comment type="interaction">
    <interactant intactId="EBI-446740">
        <id>Q14185</id>
    </interactant>
    <interactant intactId="EBI-886">
        <id>P46108</id>
        <label>CRK</label>
    </interactant>
    <organismsDiffer>false</organismsDiffer>
    <experiments>5</experiments>
</comment>
<comment type="interaction">
    <interactant intactId="EBI-446740">
        <id>Q14185</id>
    </interactant>
    <interactant intactId="EBI-25409131">
        <id>Q9H7D0-1</id>
        <label>DOCK5</label>
    </interactant>
    <organismsDiffer>false</organismsDiffer>
    <experiments>2</experiments>
</comment>
<comment type="interaction">
    <interactant intactId="EBI-446740">
        <id>Q14185</id>
    </interactant>
    <interactant intactId="EBI-346417">
        <id>Q92556</id>
        <label>ELMO1</label>
    </interactant>
    <organismsDiffer>false</organismsDiffer>
    <experiments>20</experiments>
</comment>
<comment type="interaction">
    <interactant intactId="EBI-446740">
        <id>Q14185</id>
    </interactant>
    <interactant intactId="EBI-401755">
        <id>P62993</id>
        <label>GRB2</label>
    </interactant>
    <organismsDiffer>false</organismsDiffer>
    <experiments>6</experiments>
</comment>
<comment type="interaction">
    <interactant intactId="EBI-446740">
        <id>Q14185</id>
    </interactant>
    <interactant intactId="EBI-413628">
        <id>P63000</id>
        <label>RAC1</label>
    </interactant>
    <organismsDiffer>false</organismsDiffer>
    <experiments>10</experiments>
</comment>
<comment type="subcellular location">
    <subcellularLocation>
        <location evidence="14">Cytoplasm</location>
    </subcellularLocation>
    <subcellularLocation>
        <location evidence="14">Membrane</location>
    </subcellularLocation>
    <text evidence="14">Recruited to membranes via its interaction with phosphatidylinositol 3,4,5-trisphosphate.</text>
</comment>
<comment type="tissue specificity">
    <text>Highly expressed in placenta, lung, kidney, pancreas and ovary. Expressed at intermediate level in thymus, testes and colon.</text>
</comment>
<comment type="domain">
    <text>The DOCKER domain is necessary and sufficient for the GEF activity.</text>
</comment>
<comment type="similarity">
    <text evidence="4">Belongs to the DOCK family.</text>
</comment>
<protein>
    <recommendedName>
        <fullName>Dedicator of cytokinesis protein 1</fullName>
    </recommendedName>
    <alternativeName>
        <fullName>180 kDa protein downstream of CRK</fullName>
        <shortName>DOCK180</shortName>
    </alternativeName>
</protein>
<evidence type="ECO:0000250" key="1">
    <source>
        <dbReference type="UniProtKB" id="Q8BUR4"/>
    </source>
</evidence>
<evidence type="ECO:0000255" key="2"/>
<evidence type="ECO:0000255" key="3">
    <source>
        <dbReference type="PROSITE-ProRule" id="PRU00192"/>
    </source>
</evidence>
<evidence type="ECO:0000255" key="4">
    <source>
        <dbReference type="PROSITE-ProRule" id="PRU00983"/>
    </source>
</evidence>
<evidence type="ECO:0000255" key="5">
    <source>
        <dbReference type="PROSITE-ProRule" id="PRU00984"/>
    </source>
</evidence>
<evidence type="ECO:0000256" key="6">
    <source>
        <dbReference type="SAM" id="MobiDB-lite"/>
    </source>
</evidence>
<evidence type="ECO:0000269" key="7">
    <source>
    </source>
</evidence>
<evidence type="ECO:0000269" key="8">
    <source>
    </source>
</evidence>
<evidence type="ECO:0000269" key="9">
    <source>
    </source>
</evidence>
<evidence type="ECO:0000269" key="10">
    <source>
    </source>
</evidence>
<evidence type="ECO:0000269" key="11">
    <source>
    </source>
</evidence>
<evidence type="ECO:0000269" key="12">
    <source>
    </source>
</evidence>
<evidence type="ECO:0000269" key="13">
    <source>
    </source>
</evidence>
<evidence type="ECO:0000305" key="14"/>
<evidence type="ECO:0007744" key="15">
    <source>
    </source>
</evidence>
<evidence type="ECO:0007744" key="16">
    <source>
    </source>
</evidence>
<evidence type="ECO:0007744" key="17">
    <source>
    </source>
</evidence>
<evidence type="ECO:0007829" key="18">
    <source>
        <dbReference type="PDB" id="3L4C"/>
    </source>
</evidence>
<dbReference type="EMBL" id="D50857">
    <property type="protein sequence ID" value="BAA09454.1"/>
    <property type="molecule type" value="mRNA"/>
</dbReference>
<dbReference type="EMBL" id="AL157711">
    <property type="status" value="NOT_ANNOTATED_CDS"/>
    <property type="molecule type" value="Genomic_DNA"/>
</dbReference>
<dbReference type="EMBL" id="AL359094">
    <property type="status" value="NOT_ANNOTATED_CDS"/>
    <property type="molecule type" value="Genomic_DNA"/>
</dbReference>
<dbReference type="EMBL" id="BX470201">
    <property type="status" value="NOT_ANNOTATED_CDS"/>
    <property type="molecule type" value="Genomic_DNA"/>
</dbReference>
<dbReference type="EMBL" id="AL390920">
    <property type="status" value="NOT_ANNOTATED_CDS"/>
    <property type="molecule type" value="Genomic_DNA"/>
</dbReference>
<dbReference type="EMBL" id="AL607029">
    <property type="status" value="NOT_ANNOTATED_CDS"/>
    <property type="molecule type" value="Genomic_DNA"/>
</dbReference>
<dbReference type="EMBL" id="AL355316">
    <property type="status" value="NOT_ANNOTATED_CDS"/>
    <property type="molecule type" value="Genomic_DNA"/>
</dbReference>
<dbReference type="EMBL" id="BX470155">
    <property type="status" value="NOT_ANNOTATED_CDS"/>
    <property type="molecule type" value="Genomic_DNA"/>
</dbReference>
<dbReference type="CCDS" id="CCDS73222.1"/>
<dbReference type="RefSeq" id="NP_001371.2">
    <property type="nucleotide sequence ID" value="NM_001380.5"/>
</dbReference>
<dbReference type="PDB" id="3L4C">
    <property type="method" value="X-ray"/>
    <property type="resolution" value="2.37 A"/>
    <property type="chains" value="A/B=422-619"/>
</dbReference>
<dbReference type="PDBsum" id="3L4C"/>
<dbReference type="BMRB" id="Q14185"/>
<dbReference type="SMR" id="Q14185"/>
<dbReference type="BioGRID" id="108128">
    <property type="interactions" value="61"/>
</dbReference>
<dbReference type="CORUM" id="Q14185"/>
<dbReference type="DIP" id="DIP-29391N"/>
<dbReference type="FunCoup" id="Q14185">
    <property type="interactions" value="1505"/>
</dbReference>
<dbReference type="IntAct" id="Q14185">
    <property type="interactions" value="34"/>
</dbReference>
<dbReference type="MINT" id="Q14185"/>
<dbReference type="STRING" id="9606.ENSP00000485033"/>
<dbReference type="ChEMBL" id="CHEMBL4523288"/>
<dbReference type="GlyGen" id="Q14185">
    <property type="glycosylation" value="7 sites, 1 O-linked glycan (2 sites)"/>
</dbReference>
<dbReference type="iPTMnet" id="Q14185"/>
<dbReference type="PhosphoSitePlus" id="Q14185"/>
<dbReference type="BioMuta" id="DOCK1"/>
<dbReference type="DMDM" id="209572608"/>
<dbReference type="jPOST" id="Q14185"/>
<dbReference type="MassIVE" id="Q14185"/>
<dbReference type="PaxDb" id="9606-ENSP00000280333"/>
<dbReference type="PeptideAtlas" id="Q14185"/>
<dbReference type="ProteomicsDB" id="59903"/>
<dbReference type="Pumba" id="Q14185"/>
<dbReference type="Antibodypedia" id="3822">
    <property type="antibodies" value="277 antibodies from 40 providers"/>
</dbReference>
<dbReference type="DNASU" id="1793"/>
<dbReference type="Ensembl" id="ENST00000280333.9">
    <property type="protein sequence ID" value="ENSP00000280333.6"/>
    <property type="gene ID" value="ENSG00000150760.13"/>
</dbReference>
<dbReference type="GeneID" id="1793"/>
<dbReference type="KEGG" id="hsa:1793"/>
<dbReference type="UCSC" id="uc001ljt.4">
    <property type="organism name" value="human"/>
</dbReference>
<dbReference type="AGR" id="HGNC:2987"/>
<dbReference type="CTD" id="1793"/>
<dbReference type="DisGeNET" id="1793"/>
<dbReference type="GeneCards" id="DOCK1"/>
<dbReference type="HGNC" id="HGNC:2987">
    <property type="gene designation" value="DOCK1"/>
</dbReference>
<dbReference type="HPA" id="ENSG00000150760">
    <property type="expression patterns" value="Low tissue specificity"/>
</dbReference>
<dbReference type="MIM" id="601403">
    <property type="type" value="gene"/>
</dbReference>
<dbReference type="neXtProt" id="NX_Q14185"/>
<dbReference type="OpenTargets" id="ENSG00000150760"/>
<dbReference type="PharmGKB" id="PA27453"/>
<dbReference type="VEuPathDB" id="HostDB:ENSG00000150760"/>
<dbReference type="eggNOG" id="KOG1998">
    <property type="taxonomic scope" value="Eukaryota"/>
</dbReference>
<dbReference type="GeneTree" id="ENSGT00940000154974"/>
<dbReference type="HOGENOM" id="CLU_000595_2_1_1"/>
<dbReference type="InParanoid" id="Q14185"/>
<dbReference type="OrthoDB" id="18896at2759"/>
<dbReference type="PAN-GO" id="Q14185">
    <property type="GO annotations" value="5 GO annotations based on evolutionary models"/>
</dbReference>
<dbReference type="PhylomeDB" id="Q14185"/>
<dbReference type="TreeFam" id="TF300423"/>
<dbReference type="PathwayCommons" id="Q14185"/>
<dbReference type="Reactome" id="R-HSA-2029482">
    <property type="pathway name" value="Regulation of actin dynamics for phagocytic cup formation"/>
</dbReference>
<dbReference type="Reactome" id="R-HSA-418885">
    <property type="pathway name" value="DCC mediated attractive signaling"/>
</dbReference>
<dbReference type="Reactome" id="R-HSA-4420097">
    <property type="pathway name" value="VEGFA-VEGFR2 Pathway"/>
</dbReference>
<dbReference type="Reactome" id="R-HSA-8849471">
    <property type="pathway name" value="PTK6 Regulates RHO GTPases, RAS GTPase and MAP kinases"/>
</dbReference>
<dbReference type="Reactome" id="R-HSA-9013149">
    <property type="pathway name" value="RAC1 GTPase cycle"/>
</dbReference>
<dbReference type="Reactome" id="R-HSA-9013404">
    <property type="pathway name" value="RAC2 GTPase cycle"/>
</dbReference>
<dbReference type="Reactome" id="R-HSA-9013408">
    <property type="pathway name" value="RHOG GTPase cycle"/>
</dbReference>
<dbReference type="Reactome" id="R-HSA-9664422">
    <property type="pathway name" value="FCGR3A-mediated phagocytosis"/>
</dbReference>
<dbReference type="Reactome" id="R-HSA-983231">
    <property type="pathway name" value="Factors involved in megakaryocyte development and platelet production"/>
</dbReference>
<dbReference type="SignaLink" id="Q14185"/>
<dbReference type="SIGNOR" id="Q14185"/>
<dbReference type="BioGRID-ORCS" id="1793">
    <property type="hits" value="14 hits in 389 CRISPR screens"/>
</dbReference>
<dbReference type="CD-CODE" id="FB4E32DD">
    <property type="entry name" value="Presynaptic clusters and postsynaptic densities"/>
</dbReference>
<dbReference type="ChiTaRS" id="DOCK1">
    <property type="organism name" value="human"/>
</dbReference>
<dbReference type="EvolutionaryTrace" id="Q14185"/>
<dbReference type="GeneWiki" id="Dock180"/>
<dbReference type="GenomeRNAi" id="1793"/>
<dbReference type="Pharos" id="Q14185">
    <property type="development level" value="Tbio"/>
</dbReference>
<dbReference type="PRO" id="PR:Q14185"/>
<dbReference type="Proteomes" id="UP000005640">
    <property type="component" value="Chromosome 10"/>
</dbReference>
<dbReference type="RNAct" id="Q14185">
    <property type="molecule type" value="protein"/>
</dbReference>
<dbReference type="Bgee" id="ENSG00000150760">
    <property type="expression patterns" value="Expressed in corpus callosum and 191 other cell types or tissues"/>
</dbReference>
<dbReference type="ExpressionAtlas" id="Q14185">
    <property type="expression patterns" value="baseline and differential"/>
</dbReference>
<dbReference type="GO" id="GO:0005737">
    <property type="term" value="C:cytoplasm"/>
    <property type="evidence" value="ECO:0000314"/>
    <property type="project" value="CAFA"/>
</dbReference>
<dbReference type="GO" id="GO:0005829">
    <property type="term" value="C:cytosol"/>
    <property type="evidence" value="ECO:0000304"/>
    <property type="project" value="Reactome"/>
</dbReference>
<dbReference type="GO" id="GO:0098978">
    <property type="term" value="C:glutamatergic synapse"/>
    <property type="evidence" value="ECO:0000314"/>
    <property type="project" value="SynGO"/>
</dbReference>
<dbReference type="GO" id="GO:0032045">
    <property type="term" value="C:guanyl-nucleotide exchange factor complex"/>
    <property type="evidence" value="ECO:0000314"/>
    <property type="project" value="WormBase"/>
</dbReference>
<dbReference type="GO" id="GO:0005886">
    <property type="term" value="C:plasma membrane"/>
    <property type="evidence" value="ECO:0000318"/>
    <property type="project" value="GO_Central"/>
</dbReference>
<dbReference type="GO" id="GO:0098794">
    <property type="term" value="C:postsynapse"/>
    <property type="evidence" value="ECO:0000314"/>
    <property type="project" value="SynGO"/>
</dbReference>
<dbReference type="GO" id="GO:0005096">
    <property type="term" value="F:GTPase activator activity"/>
    <property type="evidence" value="ECO:0000304"/>
    <property type="project" value="ProtInc"/>
</dbReference>
<dbReference type="GO" id="GO:0005085">
    <property type="term" value="F:guanyl-nucleotide exchange factor activity"/>
    <property type="evidence" value="ECO:0000304"/>
    <property type="project" value="Reactome"/>
</dbReference>
<dbReference type="GO" id="GO:0017124">
    <property type="term" value="F:SH3 domain binding"/>
    <property type="evidence" value="ECO:0007669"/>
    <property type="project" value="UniProtKB-KW"/>
</dbReference>
<dbReference type="GO" id="GO:0031267">
    <property type="term" value="F:small GTPase binding"/>
    <property type="evidence" value="ECO:0000318"/>
    <property type="project" value="GO_Central"/>
</dbReference>
<dbReference type="GO" id="GO:0006915">
    <property type="term" value="P:apoptotic process"/>
    <property type="evidence" value="ECO:0000304"/>
    <property type="project" value="ProtInc"/>
</dbReference>
<dbReference type="GO" id="GO:0016477">
    <property type="term" value="P:cell migration"/>
    <property type="evidence" value="ECO:0000318"/>
    <property type="project" value="GO_Central"/>
</dbReference>
<dbReference type="GO" id="GO:0007229">
    <property type="term" value="P:integrin-mediated signaling pathway"/>
    <property type="evidence" value="ECO:0000304"/>
    <property type="project" value="ProtInc"/>
</dbReference>
<dbReference type="GO" id="GO:0007520">
    <property type="term" value="P:myoblast fusion"/>
    <property type="evidence" value="ECO:0000318"/>
    <property type="project" value="GO_Central"/>
</dbReference>
<dbReference type="GO" id="GO:0006911">
    <property type="term" value="P:phagocytosis, engulfment"/>
    <property type="evidence" value="ECO:0000304"/>
    <property type="project" value="ProtInc"/>
</dbReference>
<dbReference type="GO" id="GO:0010634">
    <property type="term" value="P:positive regulation of epithelial cell migration"/>
    <property type="evidence" value="ECO:0000315"/>
    <property type="project" value="UniProtKB"/>
</dbReference>
<dbReference type="GO" id="GO:1900026">
    <property type="term" value="P:positive regulation of substrate adhesion-dependent cell spreading"/>
    <property type="evidence" value="ECO:0000315"/>
    <property type="project" value="UniProtKB"/>
</dbReference>
<dbReference type="GO" id="GO:0150052">
    <property type="term" value="P:regulation of postsynapse assembly"/>
    <property type="evidence" value="ECO:0000314"/>
    <property type="project" value="SynGO"/>
</dbReference>
<dbReference type="GO" id="GO:0007165">
    <property type="term" value="P:signal transduction"/>
    <property type="evidence" value="ECO:0000304"/>
    <property type="project" value="ProtInc"/>
</dbReference>
<dbReference type="GO" id="GO:0007264">
    <property type="term" value="P:small GTPase-mediated signal transduction"/>
    <property type="evidence" value="ECO:0000304"/>
    <property type="project" value="ProtInc"/>
</dbReference>
<dbReference type="CDD" id="cd08694">
    <property type="entry name" value="C2_Dock-A"/>
    <property type="match status" value="1"/>
</dbReference>
<dbReference type="CDD" id="cd11707">
    <property type="entry name" value="DHR2_DOCK1"/>
    <property type="match status" value="1"/>
</dbReference>
<dbReference type="CDD" id="cd12051">
    <property type="entry name" value="SH3_DOCK1_5_A"/>
    <property type="match status" value="1"/>
</dbReference>
<dbReference type="FunFam" id="1.20.58.740:FF:000004">
    <property type="entry name" value="Dedicator of cytokinesis protein 1"/>
    <property type="match status" value="1"/>
</dbReference>
<dbReference type="FunFam" id="1.25.40.410:FF:000004">
    <property type="entry name" value="Dedicator of cytokinesis protein 1"/>
    <property type="match status" value="1"/>
</dbReference>
<dbReference type="FunFam" id="2.60.40.150:FF:000044">
    <property type="entry name" value="dedicator of cytokinesis protein 1"/>
    <property type="match status" value="1"/>
</dbReference>
<dbReference type="FunFam" id="2.30.30.40:FF:000057">
    <property type="entry name" value="Dedicator of cytokinesis protein 4"/>
    <property type="match status" value="1"/>
</dbReference>
<dbReference type="FunFam" id="1.20.1270.350:FF:000001">
    <property type="entry name" value="dedicator of cytokinesis protein 4"/>
    <property type="match status" value="1"/>
</dbReference>
<dbReference type="Gene3D" id="1.20.58.740">
    <property type="match status" value="1"/>
</dbReference>
<dbReference type="Gene3D" id="1.25.40.410">
    <property type="match status" value="1"/>
</dbReference>
<dbReference type="Gene3D" id="2.60.40.150">
    <property type="entry name" value="C2 domain"/>
    <property type="match status" value="1"/>
</dbReference>
<dbReference type="Gene3D" id="1.20.1270.350">
    <property type="entry name" value="Dedicator of cytokinesis N-terminal subdomain"/>
    <property type="match status" value="1"/>
</dbReference>
<dbReference type="Gene3D" id="2.30.30.40">
    <property type="entry name" value="SH3 Domains"/>
    <property type="match status" value="1"/>
</dbReference>
<dbReference type="InterPro" id="IPR016024">
    <property type="entry name" value="ARM-type_fold"/>
</dbReference>
<dbReference type="InterPro" id="IPR027007">
    <property type="entry name" value="C2_DOCK-type_domain"/>
</dbReference>
<dbReference type="InterPro" id="IPR035892">
    <property type="entry name" value="C2_domain_sf"/>
</dbReference>
<dbReference type="InterPro" id="IPR026791">
    <property type="entry name" value="DOCK"/>
</dbReference>
<dbReference type="InterPro" id="IPR047025">
    <property type="entry name" value="DOCK1_5_SH3"/>
</dbReference>
<dbReference type="InterPro" id="IPR047026">
    <property type="entry name" value="DOCK1_C2"/>
</dbReference>
<dbReference type="InterPro" id="IPR043161">
    <property type="entry name" value="DOCK_C_lobe_A"/>
</dbReference>
<dbReference type="InterPro" id="IPR043162">
    <property type="entry name" value="DOCK_C_lobe_C"/>
</dbReference>
<dbReference type="InterPro" id="IPR032376">
    <property type="entry name" value="DOCK_N"/>
</dbReference>
<dbReference type="InterPro" id="IPR042455">
    <property type="entry name" value="DOCK_N_sub1"/>
</dbReference>
<dbReference type="InterPro" id="IPR027357">
    <property type="entry name" value="DOCKER_dom"/>
</dbReference>
<dbReference type="InterPro" id="IPR046769">
    <property type="entry name" value="DOCKER_Lobe_A"/>
</dbReference>
<dbReference type="InterPro" id="IPR046770">
    <property type="entry name" value="DOCKER_Lobe_B"/>
</dbReference>
<dbReference type="InterPro" id="IPR046773">
    <property type="entry name" value="DOCKER_Lobe_C"/>
</dbReference>
<dbReference type="InterPro" id="IPR036028">
    <property type="entry name" value="SH3-like_dom_sf"/>
</dbReference>
<dbReference type="InterPro" id="IPR001452">
    <property type="entry name" value="SH3_domain"/>
</dbReference>
<dbReference type="InterPro" id="IPR056372">
    <property type="entry name" value="TPR_DOCK"/>
</dbReference>
<dbReference type="PANTHER" id="PTHR45653">
    <property type="entry name" value="DEDICATOR OF CYTOKINESIS"/>
    <property type="match status" value="1"/>
</dbReference>
<dbReference type="PANTHER" id="PTHR45653:SF1">
    <property type="entry name" value="DEDICATOR OF CYTOKINESIS PROTEIN 1"/>
    <property type="match status" value="1"/>
</dbReference>
<dbReference type="Pfam" id="PF06920">
    <property type="entry name" value="DHR-2_Lobe_A"/>
    <property type="match status" value="1"/>
</dbReference>
<dbReference type="Pfam" id="PF20422">
    <property type="entry name" value="DHR-2_Lobe_B"/>
    <property type="match status" value="1"/>
</dbReference>
<dbReference type="Pfam" id="PF20421">
    <property type="entry name" value="DHR-2_Lobe_C"/>
    <property type="match status" value="1"/>
</dbReference>
<dbReference type="Pfam" id="PF14429">
    <property type="entry name" value="DOCK-C2"/>
    <property type="match status" value="1"/>
</dbReference>
<dbReference type="Pfam" id="PF16172">
    <property type="entry name" value="DOCK_N"/>
    <property type="match status" value="1"/>
</dbReference>
<dbReference type="Pfam" id="PF00018">
    <property type="entry name" value="SH3_1"/>
    <property type="match status" value="1"/>
</dbReference>
<dbReference type="Pfam" id="PF23554">
    <property type="entry name" value="TPR_DOCK"/>
    <property type="match status" value="1"/>
</dbReference>
<dbReference type="SMART" id="SM00326">
    <property type="entry name" value="SH3"/>
    <property type="match status" value="1"/>
</dbReference>
<dbReference type="SUPFAM" id="SSF48371">
    <property type="entry name" value="ARM repeat"/>
    <property type="match status" value="1"/>
</dbReference>
<dbReference type="SUPFAM" id="SSF50044">
    <property type="entry name" value="SH3-domain"/>
    <property type="match status" value="1"/>
</dbReference>
<dbReference type="PROSITE" id="PS51650">
    <property type="entry name" value="C2_DOCK"/>
    <property type="match status" value="1"/>
</dbReference>
<dbReference type="PROSITE" id="PS51651">
    <property type="entry name" value="DOCKER"/>
    <property type="match status" value="1"/>
</dbReference>
<dbReference type="PROSITE" id="PS50002">
    <property type="entry name" value="SH3"/>
    <property type="match status" value="1"/>
</dbReference>
<proteinExistence type="evidence at protein level"/>
<accession>Q14185</accession>
<accession>A9Z1Z5</accession>
<name>DOCK1_HUMAN</name>
<feature type="chain" id="PRO_0000189984" description="Dedicator of cytokinesis protein 1">
    <location>
        <begin position="1"/>
        <end position="1865"/>
    </location>
</feature>
<feature type="domain" description="SH3" evidence="3">
    <location>
        <begin position="9"/>
        <end position="70"/>
    </location>
</feature>
<feature type="domain" description="C2 DOCK-type" evidence="4">
    <location>
        <begin position="425"/>
        <end position="609"/>
    </location>
</feature>
<feature type="domain" description="DOCKER" evidence="5">
    <location>
        <begin position="1207"/>
        <end position="1617"/>
    </location>
</feature>
<feature type="region of interest" description="Disordered" evidence="6">
    <location>
        <begin position="1619"/>
        <end position="1716"/>
    </location>
</feature>
<feature type="region of interest" description="Phosphoinositide-binding" evidence="2">
    <location>
        <begin position="1687"/>
        <end position="1695"/>
    </location>
</feature>
<feature type="region of interest" description="Disordered" evidence="6">
    <location>
        <begin position="1732"/>
        <end position="1865"/>
    </location>
</feature>
<feature type="region of interest" description="Interaction with NCK2 second and third SH3 domain (minor)">
    <location>
        <begin position="1793"/>
        <end position="1819"/>
    </location>
</feature>
<feature type="region of interest" description="Interaction with NCK2 third SH3 domain (major)">
    <location>
        <begin position="1820"/>
        <end position="1836"/>
    </location>
</feature>
<feature type="region of interest" description="Interaction with NCK2 (minor)">
    <location>
        <begin position="1837"/>
        <end position="1852"/>
    </location>
</feature>
<feature type="short sequence motif" description="SH3-binding; interaction with CRK" evidence="2">
    <location>
        <begin position="1799"/>
        <end position="1805"/>
    </location>
</feature>
<feature type="short sequence motif" description="SH3-binding; interaction with CRK" evidence="2">
    <location>
        <begin position="1838"/>
        <end position="1843"/>
    </location>
</feature>
<feature type="compositionally biased region" description="Low complexity" evidence="6">
    <location>
        <begin position="1639"/>
        <end position="1666"/>
    </location>
</feature>
<feature type="compositionally biased region" description="Basic and acidic residues" evidence="6">
    <location>
        <begin position="1680"/>
        <end position="1694"/>
    </location>
</feature>
<feature type="compositionally biased region" description="Basic residues" evidence="6">
    <location>
        <begin position="1695"/>
        <end position="1704"/>
    </location>
</feature>
<feature type="compositionally biased region" description="Basic and acidic residues" evidence="6">
    <location>
        <begin position="1705"/>
        <end position="1716"/>
    </location>
</feature>
<feature type="compositionally biased region" description="Low complexity" evidence="6">
    <location>
        <begin position="1756"/>
        <end position="1766"/>
    </location>
</feature>
<feature type="compositionally biased region" description="Pro residues" evidence="6">
    <location>
        <begin position="1824"/>
        <end position="1851"/>
    </location>
</feature>
<feature type="compositionally biased region" description="Polar residues" evidence="6">
    <location>
        <begin position="1855"/>
        <end position="1865"/>
    </location>
</feature>
<feature type="modified residue" description="Phosphoserine" evidence="16 17">
    <location>
        <position position="1681"/>
    </location>
</feature>
<feature type="modified residue" description="Phosphoserine" evidence="1">
    <location>
        <position position="1743"/>
    </location>
</feature>
<feature type="modified residue" description="Phosphoserine" evidence="15">
    <location>
        <position position="1751"/>
    </location>
</feature>
<feature type="modified residue" description="Phosphoserine" evidence="1">
    <location>
        <position position="1756"/>
    </location>
</feature>
<feature type="modified residue" description="Phosphoserine" evidence="1">
    <location>
        <position position="1761"/>
    </location>
</feature>
<feature type="modified residue" description="Phosphoserine" evidence="1">
    <location>
        <position position="1764"/>
    </location>
</feature>
<feature type="modified residue" description="Phosphothreonine" evidence="1">
    <location>
        <position position="1767"/>
    </location>
</feature>
<feature type="modified residue" description="Phosphothreonine" evidence="1">
    <location>
        <position position="1772"/>
    </location>
</feature>
<feature type="modified residue" description="Phosphoserine" evidence="1">
    <location>
        <position position="1858"/>
    </location>
</feature>
<feature type="sequence variant" id="VAR_059971" description="In dbSNP:rs869801.">
    <original>A</original>
    <variation>T</variation>
    <location>
        <position position="1793"/>
    </location>
</feature>
<feature type="mutagenesis site" description="Abolishes Rac GEF activity." evidence="9">
    <original>YI</original>
    <variation>AA</variation>
    <location>
        <begin position="1401"/>
        <end position="1402"/>
    </location>
</feature>
<feature type="mutagenesis site" description="Abolishes Rac GEF activity." evidence="9">
    <original>ISP</original>
    <variation>AAA</variation>
    <location>
        <begin position="1487"/>
        <end position="1489"/>
    </location>
</feature>
<feature type="sequence conflict" description="In Ref. 1; BAA09454." evidence="14" ref="1">
    <original>A</original>
    <variation>T</variation>
    <location>
        <position position="1857"/>
    </location>
</feature>
<feature type="strand" evidence="18">
    <location>
        <begin position="426"/>
        <end position="436"/>
    </location>
</feature>
<feature type="strand" evidence="18">
    <location>
        <begin position="440"/>
        <end position="444"/>
    </location>
</feature>
<feature type="strand" evidence="18">
    <location>
        <begin position="448"/>
        <end position="456"/>
    </location>
</feature>
<feature type="strand" evidence="18">
    <location>
        <begin position="493"/>
        <end position="499"/>
    </location>
</feature>
<feature type="strand" evidence="18">
    <location>
        <begin position="507"/>
        <end position="515"/>
    </location>
</feature>
<feature type="strand" evidence="18">
    <location>
        <begin position="528"/>
        <end position="537"/>
    </location>
</feature>
<feature type="strand" evidence="18">
    <location>
        <begin position="546"/>
        <end position="555"/>
    </location>
</feature>
<feature type="helix" evidence="18">
    <location>
        <begin position="558"/>
        <end position="561"/>
    </location>
</feature>
<feature type="helix" evidence="18">
    <location>
        <begin position="564"/>
        <end position="567"/>
    </location>
</feature>
<feature type="helix" evidence="18">
    <location>
        <begin position="574"/>
        <end position="578"/>
    </location>
</feature>
<feature type="strand" evidence="18">
    <location>
        <begin position="595"/>
        <end position="608"/>
    </location>
</feature>
<organism>
    <name type="scientific">Homo sapiens</name>
    <name type="common">Human</name>
    <dbReference type="NCBI Taxonomy" id="9606"/>
    <lineage>
        <taxon>Eukaryota</taxon>
        <taxon>Metazoa</taxon>
        <taxon>Chordata</taxon>
        <taxon>Craniata</taxon>
        <taxon>Vertebrata</taxon>
        <taxon>Euteleostomi</taxon>
        <taxon>Mammalia</taxon>
        <taxon>Eutheria</taxon>
        <taxon>Euarchontoglires</taxon>
        <taxon>Primates</taxon>
        <taxon>Haplorrhini</taxon>
        <taxon>Catarrhini</taxon>
        <taxon>Hominidae</taxon>
        <taxon>Homo</taxon>
    </lineage>
</organism>
<reference key="1">
    <citation type="journal article" date="1996" name="Mol. Cell. Biol.">
        <title>DOCK180, a major CRK-binding protein, alters cell morphology upon translocation to the cell membrane.</title>
        <authorList>
            <person name="Hasegawa H."/>
            <person name="Kiyokawa E."/>
            <person name="Tanaka S."/>
            <person name="Nagashima K."/>
            <person name="Gotoh N."/>
            <person name="Shibuya M."/>
            <person name="Kurata T."/>
            <person name="Matsuda M."/>
        </authorList>
    </citation>
    <scope>NUCLEOTIDE SEQUENCE [MRNA]</scope>
    <scope>FUNCTION</scope>
    <scope>INTERACTION WITH CRK</scope>
    <source>
        <tissue>Placenta</tissue>
    </source>
</reference>
<reference key="2">
    <citation type="journal article" date="2004" name="Nature">
        <title>The DNA sequence and comparative analysis of human chromosome 10.</title>
        <authorList>
            <person name="Deloukas P."/>
            <person name="Earthrowl M.E."/>
            <person name="Grafham D.V."/>
            <person name="Rubenfield M."/>
            <person name="French L."/>
            <person name="Steward C.A."/>
            <person name="Sims S.K."/>
            <person name="Jones M.C."/>
            <person name="Searle S."/>
            <person name="Scott C."/>
            <person name="Howe K."/>
            <person name="Hunt S.E."/>
            <person name="Andrews T.D."/>
            <person name="Gilbert J.G.R."/>
            <person name="Swarbreck D."/>
            <person name="Ashurst J.L."/>
            <person name="Taylor A."/>
            <person name="Battles J."/>
            <person name="Bird C.P."/>
            <person name="Ainscough R."/>
            <person name="Almeida J.P."/>
            <person name="Ashwell R.I.S."/>
            <person name="Ambrose K.D."/>
            <person name="Babbage A.K."/>
            <person name="Bagguley C.L."/>
            <person name="Bailey J."/>
            <person name="Banerjee R."/>
            <person name="Bates K."/>
            <person name="Beasley H."/>
            <person name="Bray-Allen S."/>
            <person name="Brown A.J."/>
            <person name="Brown J.Y."/>
            <person name="Burford D.C."/>
            <person name="Burrill W."/>
            <person name="Burton J."/>
            <person name="Cahill P."/>
            <person name="Camire D."/>
            <person name="Carter N.P."/>
            <person name="Chapman J.C."/>
            <person name="Clark S.Y."/>
            <person name="Clarke G."/>
            <person name="Clee C.M."/>
            <person name="Clegg S."/>
            <person name="Corby N."/>
            <person name="Coulson A."/>
            <person name="Dhami P."/>
            <person name="Dutta I."/>
            <person name="Dunn M."/>
            <person name="Faulkner L."/>
            <person name="Frankish A."/>
            <person name="Frankland J.A."/>
            <person name="Garner P."/>
            <person name="Garnett J."/>
            <person name="Gribble S."/>
            <person name="Griffiths C."/>
            <person name="Grocock R."/>
            <person name="Gustafson E."/>
            <person name="Hammond S."/>
            <person name="Harley J.L."/>
            <person name="Hart E."/>
            <person name="Heath P.D."/>
            <person name="Ho T.P."/>
            <person name="Hopkins B."/>
            <person name="Horne J."/>
            <person name="Howden P.J."/>
            <person name="Huckle E."/>
            <person name="Hynds C."/>
            <person name="Johnson C."/>
            <person name="Johnson D."/>
            <person name="Kana A."/>
            <person name="Kay M."/>
            <person name="Kimberley A.M."/>
            <person name="Kershaw J.K."/>
            <person name="Kokkinaki M."/>
            <person name="Laird G.K."/>
            <person name="Lawlor S."/>
            <person name="Lee H.M."/>
            <person name="Leongamornlert D.A."/>
            <person name="Laird G."/>
            <person name="Lloyd C."/>
            <person name="Lloyd D.M."/>
            <person name="Loveland J."/>
            <person name="Lovell J."/>
            <person name="McLaren S."/>
            <person name="McLay K.E."/>
            <person name="McMurray A."/>
            <person name="Mashreghi-Mohammadi M."/>
            <person name="Matthews L."/>
            <person name="Milne S."/>
            <person name="Nickerson T."/>
            <person name="Nguyen M."/>
            <person name="Overton-Larty E."/>
            <person name="Palmer S.A."/>
            <person name="Pearce A.V."/>
            <person name="Peck A.I."/>
            <person name="Pelan S."/>
            <person name="Phillimore B."/>
            <person name="Porter K."/>
            <person name="Rice C.M."/>
            <person name="Rogosin A."/>
            <person name="Ross M.T."/>
            <person name="Sarafidou T."/>
            <person name="Sehra H.K."/>
            <person name="Shownkeen R."/>
            <person name="Skuce C.D."/>
            <person name="Smith M."/>
            <person name="Standring L."/>
            <person name="Sycamore N."/>
            <person name="Tester J."/>
            <person name="Thorpe A."/>
            <person name="Torcasso W."/>
            <person name="Tracey A."/>
            <person name="Tromans A."/>
            <person name="Tsolas J."/>
            <person name="Wall M."/>
            <person name="Walsh J."/>
            <person name="Wang H."/>
            <person name="Weinstock K."/>
            <person name="West A.P."/>
            <person name="Willey D.L."/>
            <person name="Whitehead S.L."/>
            <person name="Wilming L."/>
            <person name="Wray P.W."/>
            <person name="Young L."/>
            <person name="Chen Y."/>
            <person name="Lovering R.C."/>
            <person name="Moschonas N.K."/>
            <person name="Siebert R."/>
            <person name="Fechtel K."/>
            <person name="Bentley D."/>
            <person name="Durbin R.M."/>
            <person name="Hubbard T."/>
            <person name="Doucette-Stamm L."/>
            <person name="Beck S."/>
            <person name="Smith D.R."/>
            <person name="Rogers J."/>
        </authorList>
    </citation>
    <scope>NUCLEOTIDE SEQUENCE [LARGE SCALE GENOMIC DNA]</scope>
</reference>
<reference key="3">
    <citation type="journal article" date="1996" name="J. Biol. Chem.">
        <title>Interaction between the amino-terminal SH3 domain of CRK and its natural target proteins.</title>
        <authorList>
            <person name="Matsuda M."/>
            <person name="Ota S."/>
            <person name="Tanimura R."/>
            <person name="Nakamura H."/>
            <person name="Matuoka K."/>
            <person name="Takenawa T."/>
            <person name="Nagashima K."/>
            <person name="Kurata T."/>
        </authorList>
    </citation>
    <scope>INTERACTION WITH CRK</scope>
</reference>
<reference key="4">
    <citation type="journal article" date="1998" name="Genes Dev.">
        <title>Activation of Rac1 by a Crk SH3-binding protein, DOCK180.</title>
        <authorList>
            <person name="Kiyokawa E."/>
            <person name="Hashimoto Y."/>
            <person name="Kobayashi S."/>
            <person name="Sugimura H."/>
            <person name="Kurata T."/>
            <person name="Matsuda M."/>
        </authorList>
    </citation>
    <scope>GEF ACTIVITY</scope>
    <scope>INTERACTION WITH RAC1</scope>
</reference>
<reference key="5">
    <citation type="journal article" date="2001" name="FEBS Lett.">
        <title>Identification and kinetic analysis of the interaction between Nck-2 and DOCK180.</title>
        <authorList>
            <person name="Tu Y."/>
            <person name="Kucik D.F."/>
            <person name="Wu C."/>
        </authorList>
    </citation>
    <scope>INTERACTION WITH NCK2</scope>
</reference>
<reference key="6">
    <citation type="journal article" date="2001" name="Biochem. J.">
        <title>Membrane recruitment of DOCK180 by binding to PtdIns(3,4,5)P3.</title>
        <authorList>
            <person name="Kobayashi S."/>
            <person name="Shirai T."/>
            <person name="Kiyokawa E."/>
            <person name="Mochizuki N."/>
            <person name="Matsuda M."/>
            <person name="Fukui Y."/>
        </authorList>
    </citation>
    <scope>INTERACTION WITH PTDINS(3,4,5)P3</scope>
</reference>
<reference key="7">
    <citation type="journal article" date="2002" name="Nat. Cell Biol.">
        <title>Unconventional Rac-GEF activity is mediated through the Dock180-ELMO complex.</title>
        <authorList>
            <person name="Brugnera E."/>
            <person name="Haney L."/>
            <person name="Grimsley C."/>
            <person name="Lu M."/>
            <person name="Walk S.F."/>
            <person name="Tosello-Trampont A.-C."/>
            <person name="Macara I.G."/>
            <person name="Madhani H."/>
            <person name="Fink G.R."/>
            <person name="Ravichandran K.S."/>
        </authorList>
    </citation>
    <scope>GEF ACTIVITY</scope>
    <scope>INTERACTION WITH RAC1; ELMO1 AND ELMO2</scope>
    <scope>SUBUNIT OF A COMPLEX CONTAINING ELMO1 AND DOCK1</scope>
    <scope>MUTAGENESIS OF 1401-TYR-ILE-1402 AND 1487-ILE--PRO-1489</scope>
</reference>
<reference key="8">
    <citation type="journal article" date="2002" name="J. Cell Sci.">
        <title>Identification of an evolutionarily conserved superfamily of DOCK180-related proteins with guanine nucleotide exchange activity.</title>
        <authorList>
            <person name="Cote J.-F."/>
            <person name="Vuori K."/>
        </authorList>
    </citation>
    <scope>NOMENCLATURE</scope>
    <scope>GEF ACTIVITY</scope>
</reference>
<reference key="9">
    <citation type="journal article" date="2008" name="Proc. Natl. Acad. Sci. U.S.A.">
        <title>A quantitative atlas of mitotic phosphorylation.</title>
        <authorList>
            <person name="Dephoure N."/>
            <person name="Zhou C."/>
            <person name="Villen J."/>
            <person name="Beausoleil S.A."/>
            <person name="Bakalarski C.E."/>
            <person name="Elledge S.J."/>
            <person name="Gygi S.P."/>
        </authorList>
    </citation>
    <scope>PHOSPHORYLATION [LARGE SCALE ANALYSIS] AT SER-1751</scope>
    <scope>IDENTIFICATION BY MASS SPECTROMETRY [LARGE SCALE ANALYSIS]</scope>
    <source>
        <tissue>Cervix carcinoma</tissue>
    </source>
</reference>
<reference key="10">
    <citation type="journal article" date="2009" name="J. Biol. Chem.">
        <title>DOCK5 and DOCK1 regulate Caco-2 intestinal epithelial cell spreading and migration on collagen IV.</title>
        <authorList>
            <person name="Sanders M.A."/>
            <person name="Ampasala D."/>
            <person name="Basson M.D."/>
        </authorList>
    </citation>
    <scope>FUNCTION</scope>
</reference>
<reference key="11">
    <citation type="journal article" date="2011" name="BMC Syst. Biol.">
        <title>Initial characterization of the human central proteome.</title>
        <authorList>
            <person name="Burkard T.R."/>
            <person name="Planyavsky M."/>
            <person name="Kaupe I."/>
            <person name="Breitwieser F.P."/>
            <person name="Buerckstuemmer T."/>
            <person name="Bennett K.L."/>
            <person name="Superti-Furga G."/>
            <person name="Colinge J."/>
        </authorList>
    </citation>
    <scope>IDENTIFICATION BY MASS SPECTROMETRY [LARGE SCALE ANALYSIS]</scope>
</reference>
<reference key="12">
    <citation type="journal article" date="2013" name="J. Proteome Res.">
        <title>Toward a comprehensive characterization of a human cancer cell phosphoproteome.</title>
        <authorList>
            <person name="Zhou H."/>
            <person name="Di Palma S."/>
            <person name="Preisinger C."/>
            <person name="Peng M."/>
            <person name="Polat A.N."/>
            <person name="Heck A.J."/>
            <person name="Mohammed S."/>
        </authorList>
    </citation>
    <scope>PHOSPHORYLATION [LARGE SCALE ANALYSIS] AT SER-1681</scope>
    <scope>IDENTIFICATION BY MASS SPECTROMETRY [LARGE SCALE ANALYSIS]</scope>
    <source>
        <tissue>Cervix carcinoma</tissue>
    </source>
</reference>
<reference key="13">
    <citation type="journal article" date="2014" name="J. Proteomics">
        <title>An enzyme assisted RP-RPLC approach for in-depth analysis of human liver phosphoproteome.</title>
        <authorList>
            <person name="Bian Y."/>
            <person name="Song C."/>
            <person name="Cheng K."/>
            <person name="Dong M."/>
            <person name="Wang F."/>
            <person name="Huang J."/>
            <person name="Sun D."/>
            <person name="Wang L."/>
            <person name="Ye M."/>
            <person name="Zou H."/>
        </authorList>
    </citation>
    <scope>PHOSPHORYLATION [LARGE SCALE ANALYSIS] AT SER-1681</scope>
    <scope>IDENTIFICATION BY MASS SPECTROMETRY [LARGE SCALE ANALYSIS]</scope>
    <source>
        <tissue>Liver</tissue>
    </source>
</reference>
<keyword id="KW-0002">3D-structure</keyword>
<keyword id="KW-0053">Apoptosis</keyword>
<keyword id="KW-0963">Cytoplasm</keyword>
<keyword id="KW-0344">Guanine-nucleotide releasing factor</keyword>
<keyword id="KW-0472">Membrane</keyword>
<keyword id="KW-0581">Phagocytosis</keyword>
<keyword id="KW-0597">Phosphoprotein</keyword>
<keyword id="KW-1267">Proteomics identification</keyword>
<keyword id="KW-1185">Reference proteome</keyword>
<keyword id="KW-0728">SH3 domain</keyword>
<keyword id="KW-0729">SH3-binding</keyword>
<sequence>MTRWVPTKREEKYGVAFYNYDARGADELSLQIGDTVHILETYEGWYRGYTLRKKSKKGIFPASYIHLKEAIVEGKGQHETVIPGDLPLIQEVTTTLREWSTIWRQLYVQDNREMFRSVRHMIYDLIEWRSQILSGTLPQDELKELKKKVTAKIDYGNRILDLDLVVRDEDGNILDPELTSTISLFRAHEIASKQVEERLQEEKSQKQNIDINRQAKFAATPSLALFVNLKNVVCKIGEDAEVLMSLYDPVESKFISENYLVRWSSSGLPKDIDRLHNLRAVFTDLGSKDLKREKISFVCQIVRVGRMELRDNNTRKLTSGLRRPFGVAVMDVTDIINGKVDDEDKQHFIPFQPVAGENDFLQTVINKVIAAKEVNHKGQGLWVTLKLLPGDIHQIRKEFPHLVDRTTAVARKTGFPEIIMPGDVRNDIYVTLVQGDFDKGSKTTAKNVEVTVSVYDEDGKRLEHVIFPGAGDEAISEYKSVIYYQVKQPRWFETVKVAIPIEDVNRSHLRFTFRHRSSQDSKDKSEKIFALAFVKLMRYDGTTLRDGEHDLIVYKAEAKKLEDAATYLSLPSTKAELEEKGHSATGKSMQSLGSCTISKDSFQISTLVCSTKLTQNVDLLGLLKWRSNTSLLQQNLRQLMKVDGGEVVKFLQDTLDALFNIMMENSESETFDTLVFDALVFIIGLIADRKFQHFNPVLETYIKKHFSATLAYTKLTKVLKNYVDGAEKPGVNEQLYKAMKALESIFKFIVRSRILFNQLYENKGEADFVESLLQLFRSINDMMSSMSDQTVRVKGAALKYLPTIVNDVKLVFDPKELSKMFTEFILNVPMGLLTIQKLYCLIEIVHSDLFTQHDCREILLPMMTDQLKYHLERQEDLEACCQLLSHILEVLYRKDVGPTQRHVQIIMEKLLRTVNRTVISMGRDSELIGNFVACMTAILRQMEDYHYAHLIKTFGKMRTDVVDFLMETFIMFKNLIGKNVYPFDWVIMNMVQNKVFLRAINQYADMLNKKFLDQANFELQLWNNYFHLAVAFLTQESLQLENFSSAKRAKILNKYGDMRRQIGFEIRDMWYNLGQHKIKFIPEMVGPILEMTLIPETELRKATIPIFFDMMQCEFHSTRSFQMFENEIITKLDHEVEGGRGDEQYKVLFDKILLEHCRKHKYLAKTGETFVKLVVRLMERLLDYRTIMHDENKENRMSCTVNVLNFYKEIEREEMYIRYLYKLCDLHKECDNYTEAAYTLLLHAKLLKWSEDVCVAHLTQRDGYQATTQGQLKEQLYQEIIHYFDKGKMWEEAIALGKELAEQYENEMFDYEQLSELLKKQAQFYENIVKVIRPKPDYFAVGYYGQGFPTFLRGKVFIYRGKEYERREDFEARLLTQFPNAEKMKTTSPPGDDIKNSPGQYIQCFTVKPKLDLPPKFHRPVSEQIVSFYRVNEVQRFEYSRPIRKGEKNPDNEFANMWIERTIYTTAYKLPGILRWFEVKSVFMVEISPLENAIETMQLTNDKINSMVQQHLDDPSLPINPLSMLLNGIVDPAVMGGFANYEKAFFTDRYLQEHPEAHEKIEKLKDLIAWQIPFLAEGIRIHGDKVTEALRPFHERMEACFKQLKEKVEKEYGVRIMPSSLDDRRGSRPRSMVRSFTMPSSSRPLSVASVSSLSSDSTPSRPGSDGFALEPLLPKKMHSRSQDKLDKDDLEKEKKDKKKEKRNSKHQEIFEKEFKPTDISLQQSEAVILSETISPLRPQRPKSQVMNVIGSERRFSVSPSSPSSQQTPPPVTPRAKLSFSMQSSLELNGMTGADVADVPPPLPLKGSVADYGNLMENQDLLGSPTPPPPPPHQRHLPPPLPSKTPPPPPPKTTRKQASVDSGIVQ</sequence>
<gene>
    <name type="primary">DOCK1</name>
</gene>